<proteinExistence type="inferred from homology"/>
<organism>
    <name type="scientific">Burkholderia pseudomallei (strain K96243)</name>
    <dbReference type="NCBI Taxonomy" id="272560"/>
    <lineage>
        <taxon>Bacteria</taxon>
        <taxon>Pseudomonadati</taxon>
        <taxon>Pseudomonadota</taxon>
        <taxon>Betaproteobacteria</taxon>
        <taxon>Burkholderiales</taxon>
        <taxon>Burkholderiaceae</taxon>
        <taxon>Burkholderia</taxon>
        <taxon>pseudomallei group</taxon>
    </lineage>
</organism>
<sequence>MTMTDASDLLSLSYSHYLARAAAARPALAERIAAWAAAPVTRAALDARLDELLAQGGQPPSEDALKKALRQLRGEAFGAVAERDLAGRADVAEVTGTMTDLAEAAIQRALALLAAELEAQYGEPRGPSGERLALGVVGMGKLGGRELNVSSDIDLIFVYEDDGETAGGARGPISVHEFFTRLGRRLIGVLSEATADGYVFRVDMRLRPNGDSGPLVCSLGMLEEYFYVQGREWERYAWIKGRLVTERASAAARRLAQQLDAIVKPFVYRRYLDFGVIGAIRSLHEQIRQEARRRATMRPDKADDIKLGRGGIREIEFSAQVFQLIRGGQDAGFRVQPTLAVLRHASASGLITEEVRAGLTHAYLFLRTLEHRLQYRNDAQTHAMPVDPAERAALAASLGFADYAALIDRLDQHRAFVEAQFDQVFADKADGGARREDDQAAGCIWSGALADDGADEALVARLAELGFADPAAVLARLQAVWRSSRYAGLPESSRVRFDRVAHRALEAAPGIDAAHRDETVVRCFDLLETVGRRGAYLALLTEYPAALRRVLSVLGATRWGGGYLIRHPQLLDELLDDEAIDSPFDWPAFKDALRRRLAAADGAEHQMDLLRHAHQAEVFRILLLDLAGRLSVEHVSDRLSELADAMLDVTIEVVWSQLAKRHRDTPCFAAIAYGKLGGKELGYASDLDLIFLYDDPDERAADVYTTFARRLITWLTTATGAGTLFDIDLRLRPNGEAGLLVTDLDAFRRYQLREGDAANTAWVWEHQALTRARYSAGDARIGAAFEAIRVQVLTTPRDAAVLAREIVEMREKVLAGHPNTTERFDLKHDRGGMVDIEFAVQYWVLLHAARHPEMIRNTGNIALLREVSRFGLMSEEEAETVGAAYRTYRKLQHRLRLDGMEKARVEPERVAAERQAVAALWARVFGA</sequence>
<protein>
    <recommendedName>
        <fullName evidence="1">Bifunctional glutamine synthetase adenylyltransferase/adenylyl-removing enzyme</fullName>
    </recommendedName>
    <alternativeName>
        <fullName evidence="1">ATP:glutamine synthetase adenylyltransferase</fullName>
    </alternativeName>
    <alternativeName>
        <fullName evidence="1">ATase</fullName>
    </alternativeName>
    <domain>
        <recommendedName>
            <fullName evidence="1">Glutamine synthetase adenylyl-L-tyrosine phosphorylase</fullName>
            <ecNumber evidence="1">2.7.7.89</ecNumber>
        </recommendedName>
        <alternativeName>
            <fullName evidence="1">Adenylyl removase</fullName>
            <shortName evidence="1">AR</shortName>
            <shortName evidence="1">AT-N</shortName>
        </alternativeName>
    </domain>
    <domain>
        <recommendedName>
            <fullName evidence="1">Glutamine synthetase adenylyl transferase</fullName>
            <ecNumber evidence="1">2.7.7.42</ecNumber>
        </recommendedName>
        <alternativeName>
            <fullName evidence="1">Adenylyl transferase</fullName>
            <shortName evidence="1">AT</shortName>
            <shortName evidence="1">AT-C</shortName>
        </alternativeName>
    </domain>
</protein>
<gene>
    <name evidence="1" type="primary">glnE</name>
    <name type="ordered locus">BPSL2835</name>
</gene>
<keyword id="KW-0067">ATP-binding</keyword>
<keyword id="KW-0460">Magnesium</keyword>
<keyword id="KW-0511">Multifunctional enzyme</keyword>
<keyword id="KW-0547">Nucleotide-binding</keyword>
<keyword id="KW-0548">Nucleotidyltransferase</keyword>
<keyword id="KW-1185">Reference proteome</keyword>
<keyword id="KW-0808">Transferase</keyword>
<evidence type="ECO:0000255" key="1">
    <source>
        <dbReference type="HAMAP-Rule" id="MF_00802"/>
    </source>
</evidence>
<feature type="chain" id="PRO_0000209238" description="Bifunctional glutamine synthetase adenylyltransferase/adenylyl-removing enzyme">
    <location>
        <begin position="1"/>
        <end position="927"/>
    </location>
</feature>
<feature type="region of interest" description="Adenylyl removase" evidence="1">
    <location>
        <begin position="1"/>
        <end position="428"/>
    </location>
</feature>
<feature type="region of interest" description="Adenylyl transferase" evidence="1">
    <location>
        <begin position="438"/>
        <end position="927"/>
    </location>
</feature>
<dbReference type="EC" id="2.7.7.89" evidence="1"/>
<dbReference type="EC" id="2.7.7.42" evidence="1"/>
<dbReference type="EMBL" id="BX571965">
    <property type="protein sequence ID" value="CAH36845.1"/>
    <property type="molecule type" value="Genomic_DNA"/>
</dbReference>
<dbReference type="RefSeq" id="YP_109429.1">
    <property type="nucleotide sequence ID" value="NC_006350.1"/>
</dbReference>
<dbReference type="SMR" id="Q63R39"/>
<dbReference type="STRING" id="272560.BPSL2835"/>
<dbReference type="KEGG" id="bps:BPSL2835"/>
<dbReference type="PATRIC" id="fig|272560.6.peg.3234"/>
<dbReference type="eggNOG" id="COG1391">
    <property type="taxonomic scope" value="Bacteria"/>
</dbReference>
<dbReference type="Proteomes" id="UP000000605">
    <property type="component" value="Chromosome 1"/>
</dbReference>
<dbReference type="GO" id="GO:0005829">
    <property type="term" value="C:cytosol"/>
    <property type="evidence" value="ECO:0007669"/>
    <property type="project" value="TreeGrafter"/>
</dbReference>
<dbReference type="GO" id="GO:0008882">
    <property type="term" value="F:[glutamate-ammonia-ligase] adenylyltransferase activity"/>
    <property type="evidence" value="ECO:0007669"/>
    <property type="project" value="UniProtKB-UniRule"/>
</dbReference>
<dbReference type="GO" id="GO:0047388">
    <property type="term" value="F:[glutamine synthetase]-adenylyl-L-tyrosine phosphorylase activity"/>
    <property type="evidence" value="ECO:0007669"/>
    <property type="project" value="UniProtKB-EC"/>
</dbReference>
<dbReference type="GO" id="GO:0005524">
    <property type="term" value="F:ATP binding"/>
    <property type="evidence" value="ECO:0007669"/>
    <property type="project" value="UniProtKB-UniRule"/>
</dbReference>
<dbReference type="GO" id="GO:0000287">
    <property type="term" value="F:magnesium ion binding"/>
    <property type="evidence" value="ECO:0007669"/>
    <property type="project" value="UniProtKB-UniRule"/>
</dbReference>
<dbReference type="GO" id="GO:0000820">
    <property type="term" value="P:regulation of glutamine family amino acid metabolic process"/>
    <property type="evidence" value="ECO:0007669"/>
    <property type="project" value="UniProtKB-UniRule"/>
</dbReference>
<dbReference type="CDD" id="cd05401">
    <property type="entry name" value="NT_GlnE_GlnD_like"/>
    <property type="match status" value="2"/>
</dbReference>
<dbReference type="FunFam" id="1.20.120.330:FF:000005">
    <property type="entry name" value="Bifunctional glutamine synthetase adenylyltransferase/adenylyl-removing enzyme"/>
    <property type="match status" value="1"/>
</dbReference>
<dbReference type="Gene3D" id="1.20.120.1510">
    <property type="match status" value="1"/>
</dbReference>
<dbReference type="Gene3D" id="3.30.460.10">
    <property type="entry name" value="Beta Polymerase, domain 2"/>
    <property type="match status" value="2"/>
</dbReference>
<dbReference type="Gene3D" id="1.20.120.330">
    <property type="entry name" value="Nucleotidyltransferases domain 2"/>
    <property type="match status" value="2"/>
</dbReference>
<dbReference type="HAMAP" id="MF_00802">
    <property type="entry name" value="GlnE"/>
    <property type="match status" value="1"/>
</dbReference>
<dbReference type="InterPro" id="IPR023057">
    <property type="entry name" value="GlnE"/>
</dbReference>
<dbReference type="InterPro" id="IPR005190">
    <property type="entry name" value="GlnE_rpt_dom"/>
</dbReference>
<dbReference type="InterPro" id="IPR043519">
    <property type="entry name" value="NT_sf"/>
</dbReference>
<dbReference type="InterPro" id="IPR013546">
    <property type="entry name" value="PII_UdlTrfase/GS_AdlTrfase"/>
</dbReference>
<dbReference type="NCBIfam" id="NF008292">
    <property type="entry name" value="PRK11072.1"/>
    <property type="match status" value="1"/>
</dbReference>
<dbReference type="PANTHER" id="PTHR30621:SF0">
    <property type="entry name" value="BIFUNCTIONAL GLUTAMINE SYNTHETASE ADENYLYLTRANSFERASE_ADENYLYL-REMOVING ENZYME"/>
    <property type="match status" value="1"/>
</dbReference>
<dbReference type="PANTHER" id="PTHR30621">
    <property type="entry name" value="GLUTAMINE SYNTHETASE ADENYLYLTRANSFERASE"/>
    <property type="match status" value="1"/>
</dbReference>
<dbReference type="Pfam" id="PF08335">
    <property type="entry name" value="GlnD_UR_UTase"/>
    <property type="match status" value="2"/>
</dbReference>
<dbReference type="Pfam" id="PF03710">
    <property type="entry name" value="GlnE"/>
    <property type="match status" value="2"/>
</dbReference>
<dbReference type="SUPFAM" id="SSF81301">
    <property type="entry name" value="Nucleotidyltransferase"/>
    <property type="match status" value="2"/>
</dbReference>
<dbReference type="SUPFAM" id="SSF81593">
    <property type="entry name" value="Nucleotidyltransferase substrate binding subunit/domain"/>
    <property type="match status" value="2"/>
</dbReference>
<accession>Q63R39</accession>
<comment type="function">
    <text evidence="1">Involved in the regulation of glutamine synthetase GlnA, a key enzyme in the process to assimilate ammonia. When cellular nitrogen levels are high, the C-terminal adenylyl transferase (AT) inactivates GlnA by covalent transfer of an adenylyl group from ATP to specific tyrosine residue of GlnA, thus reducing its activity. Conversely, when nitrogen levels are low, the N-terminal adenylyl removase (AR) activates GlnA by removing the adenylyl group by phosphorolysis, increasing its activity. The regulatory region of GlnE binds the signal transduction protein PII (GlnB) which indicates the nitrogen status of the cell.</text>
</comment>
<comment type="catalytic activity">
    <reaction evidence="1">
        <text>[glutamine synthetase]-O(4)-(5'-adenylyl)-L-tyrosine + phosphate = [glutamine synthetase]-L-tyrosine + ADP</text>
        <dbReference type="Rhea" id="RHEA:43716"/>
        <dbReference type="Rhea" id="RHEA-COMP:10660"/>
        <dbReference type="Rhea" id="RHEA-COMP:10661"/>
        <dbReference type="ChEBI" id="CHEBI:43474"/>
        <dbReference type="ChEBI" id="CHEBI:46858"/>
        <dbReference type="ChEBI" id="CHEBI:83624"/>
        <dbReference type="ChEBI" id="CHEBI:456216"/>
        <dbReference type="EC" id="2.7.7.89"/>
    </reaction>
</comment>
<comment type="catalytic activity">
    <reaction evidence="1">
        <text>[glutamine synthetase]-L-tyrosine + ATP = [glutamine synthetase]-O(4)-(5'-adenylyl)-L-tyrosine + diphosphate</text>
        <dbReference type="Rhea" id="RHEA:18589"/>
        <dbReference type="Rhea" id="RHEA-COMP:10660"/>
        <dbReference type="Rhea" id="RHEA-COMP:10661"/>
        <dbReference type="ChEBI" id="CHEBI:30616"/>
        <dbReference type="ChEBI" id="CHEBI:33019"/>
        <dbReference type="ChEBI" id="CHEBI:46858"/>
        <dbReference type="ChEBI" id="CHEBI:83624"/>
        <dbReference type="EC" id="2.7.7.42"/>
    </reaction>
</comment>
<comment type="cofactor">
    <cofactor evidence="1">
        <name>Mg(2+)</name>
        <dbReference type="ChEBI" id="CHEBI:18420"/>
    </cofactor>
</comment>
<comment type="similarity">
    <text evidence="1">Belongs to the GlnE family.</text>
</comment>
<reference key="1">
    <citation type="journal article" date="2004" name="Proc. Natl. Acad. Sci. U.S.A.">
        <title>Genomic plasticity of the causative agent of melioidosis, Burkholderia pseudomallei.</title>
        <authorList>
            <person name="Holden M.T.G."/>
            <person name="Titball R.W."/>
            <person name="Peacock S.J."/>
            <person name="Cerdeno-Tarraga A.-M."/>
            <person name="Atkins T."/>
            <person name="Crossman L.C."/>
            <person name="Pitt T."/>
            <person name="Churcher C."/>
            <person name="Mungall K.L."/>
            <person name="Bentley S.D."/>
            <person name="Sebaihia M."/>
            <person name="Thomson N.R."/>
            <person name="Bason N."/>
            <person name="Beacham I.R."/>
            <person name="Brooks K."/>
            <person name="Brown K.A."/>
            <person name="Brown N.F."/>
            <person name="Challis G.L."/>
            <person name="Cherevach I."/>
            <person name="Chillingworth T."/>
            <person name="Cronin A."/>
            <person name="Crossett B."/>
            <person name="Davis P."/>
            <person name="DeShazer D."/>
            <person name="Feltwell T."/>
            <person name="Fraser A."/>
            <person name="Hance Z."/>
            <person name="Hauser H."/>
            <person name="Holroyd S."/>
            <person name="Jagels K."/>
            <person name="Keith K.E."/>
            <person name="Maddison M."/>
            <person name="Moule S."/>
            <person name="Price C."/>
            <person name="Quail M.A."/>
            <person name="Rabbinowitsch E."/>
            <person name="Rutherford K."/>
            <person name="Sanders M."/>
            <person name="Simmonds M."/>
            <person name="Songsivilai S."/>
            <person name="Stevens K."/>
            <person name="Tumapa S."/>
            <person name="Vesaratchavest M."/>
            <person name="Whitehead S."/>
            <person name="Yeats C."/>
            <person name="Barrell B.G."/>
            <person name="Oyston P.C.F."/>
            <person name="Parkhill J."/>
        </authorList>
    </citation>
    <scope>NUCLEOTIDE SEQUENCE [LARGE SCALE GENOMIC DNA]</scope>
    <source>
        <strain>K96243</strain>
    </source>
</reference>
<name>GLNE_BURPS</name>